<gene>
    <name type="primary">gtaB2</name>
    <name type="ordered locus">SSP2021</name>
</gene>
<dbReference type="EC" id="2.7.7.9"/>
<dbReference type="EMBL" id="AP008934">
    <property type="protein sequence ID" value="BAE19166.1"/>
    <property type="molecule type" value="Genomic_DNA"/>
</dbReference>
<dbReference type="SMR" id="Q49VP4"/>
<dbReference type="KEGG" id="ssp:SSP2021"/>
<dbReference type="eggNOG" id="COG1210">
    <property type="taxonomic scope" value="Bacteria"/>
</dbReference>
<dbReference type="HOGENOM" id="CLU_029499_1_2_9"/>
<dbReference type="OrthoDB" id="9803871at2"/>
<dbReference type="UniPathway" id="UPA00894"/>
<dbReference type="Proteomes" id="UP000006371">
    <property type="component" value="Chromosome"/>
</dbReference>
<dbReference type="GO" id="GO:0003983">
    <property type="term" value="F:UTP:glucose-1-phosphate uridylyltransferase activity"/>
    <property type="evidence" value="ECO:0007669"/>
    <property type="project" value="UniProtKB-EC"/>
</dbReference>
<dbReference type="GO" id="GO:0009246">
    <property type="term" value="P:enterobacterial common antigen biosynthetic process"/>
    <property type="evidence" value="ECO:0007669"/>
    <property type="project" value="UniProtKB-UniPathway"/>
</dbReference>
<dbReference type="GO" id="GO:0006011">
    <property type="term" value="P:UDP-alpha-D-glucose metabolic process"/>
    <property type="evidence" value="ECO:0007669"/>
    <property type="project" value="InterPro"/>
</dbReference>
<dbReference type="CDD" id="cd02541">
    <property type="entry name" value="UGPase_prokaryotic"/>
    <property type="match status" value="1"/>
</dbReference>
<dbReference type="Gene3D" id="3.90.550.10">
    <property type="entry name" value="Spore Coat Polysaccharide Biosynthesis Protein SpsA, Chain A"/>
    <property type="match status" value="1"/>
</dbReference>
<dbReference type="InterPro" id="IPR005771">
    <property type="entry name" value="GalU_uridylyltTrfase_bac/arc"/>
</dbReference>
<dbReference type="InterPro" id="IPR005835">
    <property type="entry name" value="NTP_transferase_dom"/>
</dbReference>
<dbReference type="InterPro" id="IPR029044">
    <property type="entry name" value="Nucleotide-diphossugar_trans"/>
</dbReference>
<dbReference type="NCBIfam" id="TIGR01099">
    <property type="entry name" value="galU"/>
    <property type="match status" value="1"/>
</dbReference>
<dbReference type="PANTHER" id="PTHR43197">
    <property type="entry name" value="UTP--GLUCOSE-1-PHOSPHATE URIDYLYLTRANSFERASE"/>
    <property type="match status" value="1"/>
</dbReference>
<dbReference type="PANTHER" id="PTHR43197:SF1">
    <property type="entry name" value="UTP--GLUCOSE-1-PHOSPHATE URIDYLYLTRANSFERASE"/>
    <property type="match status" value="1"/>
</dbReference>
<dbReference type="Pfam" id="PF00483">
    <property type="entry name" value="NTP_transferase"/>
    <property type="match status" value="1"/>
</dbReference>
<dbReference type="SUPFAM" id="SSF53448">
    <property type="entry name" value="Nucleotide-diphospho-sugar transferases"/>
    <property type="match status" value="1"/>
</dbReference>
<organism>
    <name type="scientific">Staphylococcus saprophyticus subsp. saprophyticus (strain ATCC 15305 / DSM 20229 / NCIMB 8711 / NCTC 7292 / S-41)</name>
    <dbReference type="NCBI Taxonomy" id="342451"/>
    <lineage>
        <taxon>Bacteria</taxon>
        <taxon>Bacillati</taxon>
        <taxon>Bacillota</taxon>
        <taxon>Bacilli</taxon>
        <taxon>Bacillales</taxon>
        <taxon>Staphylococcaceae</taxon>
        <taxon>Staphylococcus</taxon>
    </lineage>
</organism>
<feature type="chain" id="PRO_0000308314" description="UTP--glucose-1-phosphate uridylyltransferase 2">
    <location>
        <begin position="1"/>
        <end position="289"/>
    </location>
</feature>
<name>GTAB2_STAS1</name>
<accession>Q49VP4</accession>
<evidence type="ECO:0000250" key="1"/>
<evidence type="ECO:0000305" key="2"/>
<comment type="function">
    <text evidence="1">Catalyzes the formation of UDP-glucose from glucose-1-phosphate and UTP. This is an intermediate step in the biosynthesis of diglucosyl-diacylglycerol (Glc2-DAG), i.e. a glycolipid found in the membrane, which is also used as a membrane anchor for lipoteichoic acid (LTA) (By similarity).</text>
</comment>
<comment type="catalytic activity">
    <reaction>
        <text>alpha-D-glucose 1-phosphate + UTP + H(+) = UDP-alpha-D-glucose + diphosphate</text>
        <dbReference type="Rhea" id="RHEA:19889"/>
        <dbReference type="ChEBI" id="CHEBI:15378"/>
        <dbReference type="ChEBI" id="CHEBI:33019"/>
        <dbReference type="ChEBI" id="CHEBI:46398"/>
        <dbReference type="ChEBI" id="CHEBI:58601"/>
        <dbReference type="ChEBI" id="CHEBI:58885"/>
        <dbReference type="EC" id="2.7.7.9"/>
    </reaction>
</comment>
<comment type="pathway">
    <text>Glycolipid metabolism; diglucosyl-diacylglycerol biosynthesis.</text>
</comment>
<comment type="similarity">
    <text evidence="2">Belongs to the UDPGP type 2 family.</text>
</comment>
<sequence length="289" mass="32658">MRKIKKAIIPAAGLGTRFLPATKAMPKEMLPILDKPTIQYIVEEAARAGIEDIIIVTGKHKRAIEDHFDNQKELEMILQEKGKTDLLEKVKYSTELANIFYVRQKEQKGLGHAIYSARQFIGDEPFAVLLGDDIVESDNPAIKQLIEAYEETGKSVIGVQEVDEAQTHRYGIIDPLQKFGRKYEVNEFVEKPKQGTAPSNLAIMGRYVLTPDIFDYLATQGEGAGGEIQLTDAIERLNRADQVYAYDFEGDRYDVGEKLGFVKTTIEYALKDESMHDELVEFIKKLKLN</sequence>
<protein>
    <recommendedName>
        <fullName>UTP--glucose-1-phosphate uridylyltransferase 2</fullName>
        <ecNumber>2.7.7.9</ecNumber>
    </recommendedName>
    <alternativeName>
        <fullName>Alpha-D-glucosyl-1-phosphate uridylyltransferase 2</fullName>
    </alternativeName>
    <alternativeName>
        <fullName>UDP-glucose pyrophosphorylase 2</fullName>
        <shortName>UDPGP 2</shortName>
    </alternativeName>
    <alternativeName>
        <fullName>Uridine diphosphoglucose pyrophosphorylase 2</fullName>
    </alternativeName>
</protein>
<keyword id="KW-0119">Carbohydrate metabolism</keyword>
<keyword id="KW-0548">Nucleotidyltransferase</keyword>
<keyword id="KW-1185">Reference proteome</keyword>
<keyword id="KW-0808">Transferase</keyword>
<reference key="1">
    <citation type="journal article" date="2005" name="Proc. Natl. Acad. Sci. U.S.A.">
        <title>Whole genome sequence of Staphylococcus saprophyticus reveals the pathogenesis of uncomplicated urinary tract infection.</title>
        <authorList>
            <person name="Kuroda M."/>
            <person name="Yamashita A."/>
            <person name="Hirakawa H."/>
            <person name="Kumano M."/>
            <person name="Morikawa K."/>
            <person name="Higashide M."/>
            <person name="Maruyama A."/>
            <person name="Inose Y."/>
            <person name="Matoba K."/>
            <person name="Toh H."/>
            <person name="Kuhara S."/>
            <person name="Hattori M."/>
            <person name="Ohta T."/>
        </authorList>
    </citation>
    <scope>NUCLEOTIDE SEQUENCE [LARGE SCALE GENOMIC DNA]</scope>
    <source>
        <strain>ATCC 15305 / DSM 20229 / NCIMB 8711 / NCTC 7292 / S-41</strain>
    </source>
</reference>
<proteinExistence type="inferred from homology"/>